<accession>Q3Z2Y2</accession>
<evidence type="ECO:0000255" key="1">
    <source>
        <dbReference type="HAMAP-Rule" id="MF_01199"/>
    </source>
</evidence>
<dbReference type="EMBL" id="CP000038">
    <property type="protein sequence ID" value="AAZ87880.1"/>
    <property type="molecule type" value="Genomic_DNA"/>
</dbReference>
<dbReference type="RefSeq" id="WP_011310185.1">
    <property type="nucleotide sequence ID" value="NC_007384.1"/>
</dbReference>
<dbReference type="SMR" id="Q3Z2Y2"/>
<dbReference type="KEGG" id="ssn:SSON_1155"/>
<dbReference type="HOGENOM" id="CLU_143527_1_0_6"/>
<dbReference type="Proteomes" id="UP000002529">
    <property type="component" value="Chromosome"/>
</dbReference>
<dbReference type="GO" id="GO:0005737">
    <property type="term" value="C:cytoplasm"/>
    <property type="evidence" value="ECO:0007669"/>
    <property type="project" value="UniProtKB-SubCell"/>
</dbReference>
<dbReference type="GO" id="GO:0009267">
    <property type="term" value="P:cellular response to starvation"/>
    <property type="evidence" value="ECO:0007669"/>
    <property type="project" value="UniProtKB-UniRule"/>
</dbReference>
<dbReference type="Gene3D" id="2.40.50.650">
    <property type="match status" value="1"/>
</dbReference>
<dbReference type="HAMAP" id="MF_01199">
    <property type="entry name" value="Anti_adapt_IraM"/>
    <property type="match status" value="1"/>
</dbReference>
<dbReference type="InterPro" id="IPR014448">
    <property type="entry name" value="Anti-adapter_IraM"/>
</dbReference>
<dbReference type="InterPro" id="IPR038679">
    <property type="entry name" value="PmrD_sf"/>
</dbReference>
<dbReference type="NCBIfam" id="NF007393">
    <property type="entry name" value="PRK09919.1"/>
    <property type="match status" value="1"/>
</dbReference>
<dbReference type="PIRSF" id="PIRSF007036">
    <property type="entry name" value="Elb1"/>
    <property type="match status" value="1"/>
</dbReference>
<name>IRAM_SHISS</name>
<organism>
    <name type="scientific">Shigella sonnei (strain Ss046)</name>
    <dbReference type="NCBI Taxonomy" id="300269"/>
    <lineage>
        <taxon>Bacteria</taxon>
        <taxon>Pseudomonadati</taxon>
        <taxon>Pseudomonadota</taxon>
        <taxon>Gammaproteobacteria</taxon>
        <taxon>Enterobacterales</taxon>
        <taxon>Enterobacteriaceae</taxon>
        <taxon>Shigella</taxon>
    </lineage>
</organism>
<protein>
    <recommendedName>
        <fullName evidence="1">Anti-adapter protein IraM</fullName>
    </recommendedName>
</protein>
<gene>
    <name evidence="1" type="primary">iraM</name>
    <name type="ordered locus">SSON_1155</name>
</gene>
<reference key="1">
    <citation type="journal article" date="2005" name="Nucleic Acids Res.">
        <title>Genome dynamics and diversity of Shigella species, the etiologic agents of bacillary dysentery.</title>
        <authorList>
            <person name="Yang F."/>
            <person name="Yang J."/>
            <person name="Zhang X."/>
            <person name="Chen L."/>
            <person name="Jiang Y."/>
            <person name="Yan Y."/>
            <person name="Tang X."/>
            <person name="Wang J."/>
            <person name="Xiong Z."/>
            <person name="Dong J."/>
            <person name="Xue Y."/>
            <person name="Zhu Y."/>
            <person name="Xu X."/>
            <person name="Sun L."/>
            <person name="Chen S."/>
            <person name="Nie H."/>
            <person name="Peng J."/>
            <person name="Xu J."/>
            <person name="Wang Y."/>
            <person name="Yuan Z."/>
            <person name="Wen Y."/>
            <person name="Yao Z."/>
            <person name="Shen Y."/>
            <person name="Qiang B."/>
            <person name="Hou Y."/>
            <person name="Yu J."/>
            <person name="Jin Q."/>
        </authorList>
    </citation>
    <scope>NUCLEOTIDE SEQUENCE [LARGE SCALE GENOMIC DNA]</scope>
    <source>
        <strain>Ss046</strain>
    </source>
</reference>
<keyword id="KW-0963">Cytoplasm</keyword>
<keyword id="KW-1185">Reference proteome</keyword>
<keyword id="KW-0346">Stress response</keyword>
<proteinExistence type="inferred from homology"/>
<feature type="chain" id="PRO_0000337889" description="Anti-adapter protein IraM">
    <location>
        <begin position="1"/>
        <end position="107"/>
    </location>
</feature>
<comment type="function">
    <text evidence="1">Inhibits RpoS proteolysis by regulating RssB activity, thereby increasing the stability of the sigma stress factor RpoS during magnesium starvation.</text>
</comment>
<comment type="subcellular location">
    <subcellularLocation>
        <location evidence="1">Cytoplasm</location>
    </subcellularLocation>
</comment>
<comment type="similarity">
    <text evidence="1">Belongs to the IraM/RssC family.</text>
</comment>
<sequence length="107" mass="12134">MKWVVIDTVIQPTCGISFSAIWGDMKKIIWYQSTIFLPPGSIFTPVKLGIILKEKEYPITIYNIAPFNKNLWSLLKSSQECPPGESKITNKCLHNSCIIKICPYGLK</sequence>